<evidence type="ECO:0000255" key="1">
    <source>
        <dbReference type="HAMAP-Rule" id="MF_01588"/>
    </source>
</evidence>
<organism>
    <name type="scientific">Leuconostoc mesenteroides subsp. mesenteroides (strain ATCC 8293 / DSM 20343 / BCRC 11652 / CCM 1803 / JCM 6124 / NCDO 523 / NBRC 100496 / NCIMB 8023 / NCTC 12954 / NRRL B-1118 / 37Y)</name>
    <dbReference type="NCBI Taxonomy" id="203120"/>
    <lineage>
        <taxon>Bacteria</taxon>
        <taxon>Bacillati</taxon>
        <taxon>Bacillota</taxon>
        <taxon>Bacilli</taxon>
        <taxon>Lactobacillales</taxon>
        <taxon>Lactobacillaceae</taxon>
        <taxon>Leuconostoc</taxon>
    </lineage>
</organism>
<name>DNLJ_LEUMM</name>
<sequence>MLPDFTPIEKLTTQDAQQETARLQKQLVQYGTAYYEDDAPLVEDYIYDALYARLVALEEKFPQYVIPDSPTQNVGSADTKSELQKVVHPAPMLSLGDVFSLDELNDWDARTTKSLGNQAPYNLELKIDGLAVALTYVDGQLVQASTRGNGIVGEDVTANVKTIKAIPKKLTEPLTIEVRGEIYMPKASFAALNKQREADGLEPFANPRNAAAGSLRQLNVKITKSRNLAAFVYYTAEPEMLGVTTQSGALERFAELGLPTDTHNRVINKMADIADYIDEYTSERESLSYGIDGVVVKVNQLDLQFDLGNTVKIPRWAIAYKFPPEEALTIVCDIEWTVGRTGAVTPTAVMDPVLLAGTTVQRASLHNPDYLREKDIQIGDTVTLHKAGDIIPEIGQVILEKRPTDSETYQVPTICPACESNLVHIEGEVALRCINPFCSAQIQEGLTHFASRNAMNIDGMGPRVVGQLLKAGYIKDVASIYRITVEQLLTLDKFQEKSAVKLIDAINSSKENSLERLLFGLGIRMVGAKAARLIAEKFRTLSAVSEASVEDIANINGIGHTIAQSIVQYFSTPESKQLLVELASSGVNQSYLSDTVIDENSFFYGKKVVLTGKLEQSSRPAATKWLQDHGANVAGSVSVKTDLVIAGEAAGSKLDKASQLGVTVWTEQQFVDEQVKEDGK</sequence>
<protein>
    <recommendedName>
        <fullName evidence="1">DNA ligase</fullName>
        <ecNumber evidence="1">6.5.1.2</ecNumber>
    </recommendedName>
    <alternativeName>
        <fullName evidence="1">Polydeoxyribonucleotide synthase [NAD(+)]</fullName>
    </alternativeName>
</protein>
<proteinExistence type="inferred from homology"/>
<dbReference type="EC" id="6.5.1.2" evidence="1"/>
<dbReference type="EMBL" id="CP000414">
    <property type="protein sequence ID" value="ABJ61682.1"/>
    <property type="molecule type" value="Genomic_DNA"/>
</dbReference>
<dbReference type="RefSeq" id="WP_011679393.1">
    <property type="nucleotide sequence ID" value="NC_008531.1"/>
</dbReference>
<dbReference type="SMR" id="Q03YP0"/>
<dbReference type="EnsemblBacteria" id="ABJ61682">
    <property type="protein sequence ID" value="ABJ61682"/>
    <property type="gene ID" value="LEUM_0568"/>
</dbReference>
<dbReference type="GeneID" id="29577310"/>
<dbReference type="KEGG" id="lme:LEUM_0568"/>
<dbReference type="eggNOG" id="COG0272">
    <property type="taxonomic scope" value="Bacteria"/>
</dbReference>
<dbReference type="HOGENOM" id="CLU_007764_2_1_9"/>
<dbReference type="Proteomes" id="UP000000362">
    <property type="component" value="Chromosome"/>
</dbReference>
<dbReference type="GO" id="GO:0005829">
    <property type="term" value="C:cytosol"/>
    <property type="evidence" value="ECO:0007669"/>
    <property type="project" value="TreeGrafter"/>
</dbReference>
<dbReference type="GO" id="GO:0003677">
    <property type="term" value="F:DNA binding"/>
    <property type="evidence" value="ECO:0007669"/>
    <property type="project" value="InterPro"/>
</dbReference>
<dbReference type="GO" id="GO:0003911">
    <property type="term" value="F:DNA ligase (NAD+) activity"/>
    <property type="evidence" value="ECO:0007669"/>
    <property type="project" value="UniProtKB-UniRule"/>
</dbReference>
<dbReference type="GO" id="GO:0046872">
    <property type="term" value="F:metal ion binding"/>
    <property type="evidence" value="ECO:0007669"/>
    <property type="project" value="UniProtKB-KW"/>
</dbReference>
<dbReference type="GO" id="GO:0006281">
    <property type="term" value="P:DNA repair"/>
    <property type="evidence" value="ECO:0007669"/>
    <property type="project" value="UniProtKB-KW"/>
</dbReference>
<dbReference type="GO" id="GO:0006260">
    <property type="term" value="P:DNA replication"/>
    <property type="evidence" value="ECO:0007669"/>
    <property type="project" value="UniProtKB-KW"/>
</dbReference>
<dbReference type="CDD" id="cd17748">
    <property type="entry name" value="BRCT_DNA_ligase_like"/>
    <property type="match status" value="1"/>
</dbReference>
<dbReference type="CDD" id="cd00114">
    <property type="entry name" value="LIGANc"/>
    <property type="match status" value="1"/>
</dbReference>
<dbReference type="FunFam" id="1.10.150.20:FF:000006">
    <property type="entry name" value="DNA ligase"/>
    <property type="match status" value="1"/>
</dbReference>
<dbReference type="FunFam" id="1.10.150.20:FF:000007">
    <property type="entry name" value="DNA ligase"/>
    <property type="match status" value="1"/>
</dbReference>
<dbReference type="FunFam" id="2.40.50.140:FF:000012">
    <property type="entry name" value="DNA ligase"/>
    <property type="match status" value="1"/>
</dbReference>
<dbReference type="FunFam" id="3.30.470.30:FF:000001">
    <property type="entry name" value="DNA ligase"/>
    <property type="match status" value="1"/>
</dbReference>
<dbReference type="Gene3D" id="6.20.10.30">
    <property type="match status" value="1"/>
</dbReference>
<dbReference type="Gene3D" id="1.10.150.20">
    <property type="entry name" value="5' to 3' exonuclease, C-terminal subdomain"/>
    <property type="match status" value="2"/>
</dbReference>
<dbReference type="Gene3D" id="3.40.50.10190">
    <property type="entry name" value="BRCT domain"/>
    <property type="match status" value="1"/>
</dbReference>
<dbReference type="Gene3D" id="3.30.470.30">
    <property type="entry name" value="DNA ligase/mRNA capping enzyme"/>
    <property type="match status" value="1"/>
</dbReference>
<dbReference type="Gene3D" id="1.10.287.610">
    <property type="entry name" value="Helix hairpin bin"/>
    <property type="match status" value="1"/>
</dbReference>
<dbReference type="Gene3D" id="2.40.50.140">
    <property type="entry name" value="Nucleic acid-binding proteins"/>
    <property type="match status" value="1"/>
</dbReference>
<dbReference type="HAMAP" id="MF_01588">
    <property type="entry name" value="DNA_ligase_A"/>
    <property type="match status" value="1"/>
</dbReference>
<dbReference type="InterPro" id="IPR001357">
    <property type="entry name" value="BRCT_dom"/>
</dbReference>
<dbReference type="InterPro" id="IPR036420">
    <property type="entry name" value="BRCT_dom_sf"/>
</dbReference>
<dbReference type="InterPro" id="IPR041663">
    <property type="entry name" value="DisA/LigA_HHH"/>
</dbReference>
<dbReference type="InterPro" id="IPR001679">
    <property type="entry name" value="DNA_ligase"/>
</dbReference>
<dbReference type="InterPro" id="IPR018239">
    <property type="entry name" value="DNA_ligase_AS"/>
</dbReference>
<dbReference type="InterPro" id="IPR033136">
    <property type="entry name" value="DNA_ligase_CS"/>
</dbReference>
<dbReference type="InterPro" id="IPR013839">
    <property type="entry name" value="DNAligase_adenylation"/>
</dbReference>
<dbReference type="InterPro" id="IPR013840">
    <property type="entry name" value="DNAligase_N"/>
</dbReference>
<dbReference type="InterPro" id="IPR003583">
    <property type="entry name" value="Hlx-hairpin-Hlx_DNA-bd_motif"/>
</dbReference>
<dbReference type="InterPro" id="IPR012340">
    <property type="entry name" value="NA-bd_OB-fold"/>
</dbReference>
<dbReference type="InterPro" id="IPR004150">
    <property type="entry name" value="NAD_DNA_ligase_OB"/>
</dbReference>
<dbReference type="InterPro" id="IPR010994">
    <property type="entry name" value="RuvA_2-like"/>
</dbReference>
<dbReference type="InterPro" id="IPR004149">
    <property type="entry name" value="Znf_DNAligase_C4"/>
</dbReference>
<dbReference type="NCBIfam" id="TIGR00575">
    <property type="entry name" value="dnlj"/>
    <property type="match status" value="1"/>
</dbReference>
<dbReference type="NCBIfam" id="NF005932">
    <property type="entry name" value="PRK07956.1"/>
    <property type="match status" value="1"/>
</dbReference>
<dbReference type="PANTHER" id="PTHR23389">
    <property type="entry name" value="CHROMOSOME TRANSMISSION FIDELITY FACTOR 18"/>
    <property type="match status" value="1"/>
</dbReference>
<dbReference type="PANTHER" id="PTHR23389:SF9">
    <property type="entry name" value="DNA LIGASE"/>
    <property type="match status" value="1"/>
</dbReference>
<dbReference type="Pfam" id="PF00533">
    <property type="entry name" value="BRCT"/>
    <property type="match status" value="1"/>
</dbReference>
<dbReference type="Pfam" id="PF01653">
    <property type="entry name" value="DNA_ligase_aden"/>
    <property type="match status" value="1"/>
</dbReference>
<dbReference type="Pfam" id="PF03120">
    <property type="entry name" value="DNA_ligase_OB"/>
    <property type="match status" value="1"/>
</dbReference>
<dbReference type="Pfam" id="PF03119">
    <property type="entry name" value="DNA_ligase_ZBD"/>
    <property type="match status" value="1"/>
</dbReference>
<dbReference type="Pfam" id="PF12826">
    <property type="entry name" value="HHH_2"/>
    <property type="match status" value="1"/>
</dbReference>
<dbReference type="Pfam" id="PF14520">
    <property type="entry name" value="HHH_5"/>
    <property type="match status" value="1"/>
</dbReference>
<dbReference type="PIRSF" id="PIRSF001604">
    <property type="entry name" value="LigA"/>
    <property type="match status" value="1"/>
</dbReference>
<dbReference type="SMART" id="SM00292">
    <property type="entry name" value="BRCT"/>
    <property type="match status" value="1"/>
</dbReference>
<dbReference type="SMART" id="SM00278">
    <property type="entry name" value="HhH1"/>
    <property type="match status" value="3"/>
</dbReference>
<dbReference type="SMART" id="SM00532">
    <property type="entry name" value="LIGANc"/>
    <property type="match status" value="1"/>
</dbReference>
<dbReference type="SUPFAM" id="SSF52113">
    <property type="entry name" value="BRCT domain"/>
    <property type="match status" value="1"/>
</dbReference>
<dbReference type="SUPFAM" id="SSF56091">
    <property type="entry name" value="DNA ligase/mRNA capping enzyme, catalytic domain"/>
    <property type="match status" value="1"/>
</dbReference>
<dbReference type="SUPFAM" id="SSF50249">
    <property type="entry name" value="Nucleic acid-binding proteins"/>
    <property type="match status" value="1"/>
</dbReference>
<dbReference type="SUPFAM" id="SSF47781">
    <property type="entry name" value="RuvA domain 2-like"/>
    <property type="match status" value="1"/>
</dbReference>
<dbReference type="PROSITE" id="PS50172">
    <property type="entry name" value="BRCT"/>
    <property type="match status" value="1"/>
</dbReference>
<dbReference type="PROSITE" id="PS01055">
    <property type="entry name" value="DNA_LIGASE_N1"/>
    <property type="match status" value="1"/>
</dbReference>
<dbReference type="PROSITE" id="PS01056">
    <property type="entry name" value="DNA_LIGASE_N2"/>
    <property type="match status" value="1"/>
</dbReference>
<feature type="chain" id="PRO_0000313294" description="DNA ligase">
    <location>
        <begin position="1"/>
        <end position="680"/>
    </location>
</feature>
<feature type="domain" description="BRCT" evidence="1">
    <location>
        <begin position="598"/>
        <end position="680"/>
    </location>
</feature>
<feature type="active site" description="N6-AMP-lysine intermediate" evidence="1">
    <location>
        <position position="126"/>
    </location>
</feature>
<feature type="binding site" evidence="1">
    <location>
        <begin position="44"/>
        <end position="48"/>
    </location>
    <ligand>
        <name>NAD(+)</name>
        <dbReference type="ChEBI" id="CHEBI:57540"/>
    </ligand>
</feature>
<feature type="binding site" evidence="1">
    <location>
        <begin position="94"/>
        <end position="95"/>
    </location>
    <ligand>
        <name>NAD(+)</name>
        <dbReference type="ChEBI" id="CHEBI:57540"/>
    </ligand>
</feature>
<feature type="binding site" evidence="1">
    <location>
        <position position="124"/>
    </location>
    <ligand>
        <name>NAD(+)</name>
        <dbReference type="ChEBI" id="CHEBI:57540"/>
    </ligand>
</feature>
<feature type="binding site" evidence="1">
    <location>
        <position position="147"/>
    </location>
    <ligand>
        <name>NAD(+)</name>
        <dbReference type="ChEBI" id="CHEBI:57540"/>
    </ligand>
</feature>
<feature type="binding site" evidence="1">
    <location>
        <position position="181"/>
    </location>
    <ligand>
        <name>NAD(+)</name>
        <dbReference type="ChEBI" id="CHEBI:57540"/>
    </ligand>
</feature>
<feature type="binding site" evidence="1">
    <location>
        <position position="297"/>
    </location>
    <ligand>
        <name>NAD(+)</name>
        <dbReference type="ChEBI" id="CHEBI:57540"/>
    </ligand>
</feature>
<feature type="binding site" evidence="1">
    <location>
        <position position="321"/>
    </location>
    <ligand>
        <name>NAD(+)</name>
        <dbReference type="ChEBI" id="CHEBI:57540"/>
    </ligand>
</feature>
<feature type="binding site" evidence="1">
    <location>
        <position position="415"/>
    </location>
    <ligand>
        <name>Zn(2+)</name>
        <dbReference type="ChEBI" id="CHEBI:29105"/>
    </ligand>
</feature>
<feature type="binding site" evidence="1">
    <location>
        <position position="418"/>
    </location>
    <ligand>
        <name>Zn(2+)</name>
        <dbReference type="ChEBI" id="CHEBI:29105"/>
    </ligand>
</feature>
<feature type="binding site" evidence="1">
    <location>
        <position position="433"/>
    </location>
    <ligand>
        <name>Zn(2+)</name>
        <dbReference type="ChEBI" id="CHEBI:29105"/>
    </ligand>
</feature>
<feature type="binding site" evidence="1">
    <location>
        <position position="438"/>
    </location>
    <ligand>
        <name>Zn(2+)</name>
        <dbReference type="ChEBI" id="CHEBI:29105"/>
    </ligand>
</feature>
<comment type="function">
    <text evidence="1">DNA ligase that catalyzes the formation of phosphodiester linkages between 5'-phosphoryl and 3'-hydroxyl groups in double-stranded DNA using NAD as a coenzyme and as the energy source for the reaction. It is essential for DNA replication and repair of damaged DNA.</text>
</comment>
<comment type="catalytic activity">
    <reaction evidence="1">
        <text>NAD(+) + (deoxyribonucleotide)n-3'-hydroxyl + 5'-phospho-(deoxyribonucleotide)m = (deoxyribonucleotide)n+m + AMP + beta-nicotinamide D-nucleotide.</text>
        <dbReference type="EC" id="6.5.1.2"/>
    </reaction>
</comment>
<comment type="cofactor">
    <cofactor evidence="1">
        <name>Mg(2+)</name>
        <dbReference type="ChEBI" id="CHEBI:18420"/>
    </cofactor>
    <cofactor evidence="1">
        <name>Mn(2+)</name>
        <dbReference type="ChEBI" id="CHEBI:29035"/>
    </cofactor>
</comment>
<comment type="similarity">
    <text evidence="1">Belongs to the NAD-dependent DNA ligase family. LigA subfamily.</text>
</comment>
<reference key="1">
    <citation type="journal article" date="2006" name="Proc. Natl. Acad. Sci. U.S.A.">
        <title>Comparative genomics of the lactic acid bacteria.</title>
        <authorList>
            <person name="Makarova K.S."/>
            <person name="Slesarev A."/>
            <person name="Wolf Y.I."/>
            <person name="Sorokin A."/>
            <person name="Mirkin B."/>
            <person name="Koonin E.V."/>
            <person name="Pavlov A."/>
            <person name="Pavlova N."/>
            <person name="Karamychev V."/>
            <person name="Polouchine N."/>
            <person name="Shakhova V."/>
            <person name="Grigoriev I."/>
            <person name="Lou Y."/>
            <person name="Rohksar D."/>
            <person name="Lucas S."/>
            <person name="Huang K."/>
            <person name="Goodstein D.M."/>
            <person name="Hawkins T."/>
            <person name="Plengvidhya V."/>
            <person name="Welker D."/>
            <person name="Hughes J."/>
            <person name="Goh Y."/>
            <person name="Benson A."/>
            <person name="Baldwin K."/>
            <person name="Lee J.-H."/>
            <person name="Diaz-Muniz I."/>
            <person name="Dosti B."/>
            <person name="Smeianov V."/>
            <person name="Wechter W."/>
            <person name="Barabote R."/>
            <person name="Lorca G."/>
            <person name="Altermann E."/>
            <person name="Barrangou R."/>
            <person name="Ganesan B."/>
            <person name="Xie Y."/>
            <person name="Rawsthorne H."/>
            <person name="Tamir D."/>
            <person name="Parker C."/>
            <person name="Breidt F."/>
            <person name="Broadbent J.R."/>
            <person name="Hutkins R."/>
            <person name="O'Sullivan D."/>
            <person name="Steele J."/>
            <person name="Unlu G."/>
            <person name="Saier M.H. Jr."/>
            <person name="Klaenhammer T."/>
            <person name="Richardson P."/>
            <person name="Kozyavkin S."/>
            <person name="Weimer B.C."/>
            <person name="Mills D.A."/>
        </authorList>
    </citation>
    <scope>NUCLEOTIDE SEQUENCE [LARGE SCALE GENOMIC DNA]</scope>
    <source>
        <strain>ATCC 8293 / DSM 20343 / BCRC 11652 / CCM 1803 / JCM 6124 / NCDO 523 / NBRC 100496 / NCIMB 8023 / NCTC 12954 / NRRL B-1118 / 37Y</strain>
    </source>
</reference>
<accession>Q03YP0</accession>
<keyword id="KW-0227">DNA damage</keyword>
<keyword id="KW-0234">DNA repair</keyword>
<keyword id="KW-0235">DNA replication</keyword>
<keyword id="KW-0436">Ligase</keyword>
<keyword id="KW-0460">Magnesium</keyword>
<keyword id="KW-0464">Manganese</keyword>
<keyword id="KW-0479">Metal-binding</keyword>
<keyword id="KW-0520">NAD</keyword>
<keyword id="KW-1185">Reference proteome</keyword>
<keyword id="KW-0862">Zinc</keyword>
<gene>
    <name evidence="1" type="primary">ligA</name>
    <name type="ordered locus">LEUM_0568</name>
</gene>